<name>FZD2_RAT</name>
<evidence type="ECO:0000250" key="1"/>
<evidence type="ECO:0000250" key="2">
    <source>
        <dbReference type="UniProtKB" id="Q14332"/>
    </source>
</evidence>
<evidence type="ECO:0000255" key="3"/>
<evidence type="ECO:0000255" key="4">
    <source>
        <dbReference type="PROSITE-ProRule" id="PRU00090"/>
    </source>
</evidence>
<evidence type="ECO:0000256" key="5">
    <source>
        <dbReference type="SAM" id="MobiDB-lite"/>
    </source>
</evidence>
<evidence type="ECO:0000305" key="6"/>
<organism>
    <name type="scientific">Rattus norvegicus</name>
    <name type="common">Rat</name>
    <dbReference type="NCBI Taxonomy" id="10116"/>
    <lineage>
        <taxon>Eukaryota</taxon>
        <taxon>Metazoa</taxon>
        <taxon>Chordata</taxon>
        <taxon>Craniata</taxon>
        <taxon>Vertebrata</taxon>
        <taxon>Euteleostomi</taxon>
        <taxon>Mammalia</taxon>
        <taxon>Eutheria</taxon>
        <taxon>Euarchontoglires</taxon>
        <taxon>Glires</taxon>
        <taxon>Rodentia</taxon>
        <taxon>Myomorpha</taxon>
        <taxon>Muroidea</taxon>
        <taxon>Muridae</taxon>
        <taxon>Murinae</taxon>
        <taxon>Rattus</taxon>
    </lineage>
</organism>
<proteinExistence type="evidence at protein level"/>
<protein>
    <recommendedName>
        <fullName>Frizzled-2</fullName>
        <shortName>Fz-2</shortName>
        <shortName>rFz2</shortName>
    </recommendedName>
</protein>
<accession>Q08464</accession>
<feature type="signal peptide" evidence="3">
    <location>
        <begin position="1"/>
        <end position="28"/>
    </location>
</feature>
<feature type="chain" id="PRO_0000012980" description="Frizzled-2">
    <location>
        <begin position="29"/>
        <end position="570"/>
    </location>
</feature>
<feature type="topological domain" description="Extracellular" evidence="3">
    <location>
        <begin position="29"/>
        <end position="252"/>
    </location>
</feature>
<feature type="transmembrane region" description="Helical; Name=1" evidence="3">
    <location>
        <begin position="253"/>
        <end position="273"/>
    </location>
</feature>
<feature type="topological domain" description="Cytoplasmic" evidence="3">
    <location>
        <begin position="274"/>
        <end position="284"/>
    </location>
</feature>
<feature type="transmembrane region" description="Helical; Name=2" evidence="3">
    <location>
        <begin position="285"/>
        <end position="305"/>
    </location>
</feature>
<feature type="topological domain" description="Extracellular" evidence="3">
    <location>
        <begin position="306"/>
        <end position="332"/>
    </location>
</feature>
<feature type="transmembrane region" description="Helical; Name=3" evidence="3">
    <location>
        <begin position="333"/>
        <end position="353"/>
    </location>
</feature>
<feature type="topological domain" description="Cytoplasmic" evidence="3">
    <location>
        <begin position="354"/>
        <end position="375"/>
    </location>
</feature>
<feature type="transmembrane region" description="Helical; Name=4" evidence="3">
    <location>
        <begin position="376"/>
        <end position="396"/>
    </location>
</feature>
<feature type="topological domain" description="Extracellular" evidence="3">
    <location>
        <begin position="397"/>
        <end position="419"/>
    </location>
</feature>
<feature type="transmembrane region" description="Helical; Name=5" evidence="3">
    <location>
        <begin position="420"/>
        <end position="440"/>
    </location>
</feature>
<feature type="topological domain" description="Cytoplasmic" evidence="3">
    <location>
        <begin position="441"/>
        <end position="466"/>
    </location>
</feature>
<feature type="transmembrane region" description="Helical; Name=6" evidence="3">
    <location>
        <begin position="467"/>
        <end position="487"/>
    </location>
</feature>
<feature type="topological domain" description="Extracellular" evidence="3">
    <location>
        <begin position="488"/>
        <end position="524"/>
    </location>
</feature>
<feature type="transmembrane region" description="Helical; Name=7" evidence="3">
    <location>
        <begin position="525"/>
        <end position="545"/>
    </location>
</feature>
<feature type="topological domain" description="Cytoplasmic" evidence="3">
    <location>
        <begin position="546"/>
        <end position="570"/>
    </location>
</feature>
<feature type="domain" description="FZ" evidence="4">
    <location>
        <begin position="39"/>
        <end position="158"/>
    </location>
</feature>
<feature type="region of interest" description="Disordered" evidence="5">
    <location>
        <begin position="166"/>
        <end position="194"/>
    </location>
</feature>
<feature type="short sequence motif" description="Lys-Thr-X-X-X-Trp motif, mediates interaction with the PDZ domain of Dvl family members" evidence="1">
    <location>
        <begin position="548"/>
        <end position="553"/>
    </location>
</feature>
<feature type="short sequence motif" description="PDZ-binding">
    <location>
        <begin position="568"/>
        <end position="570"/>
    </location>
</feature>
<feature type="compositionally biased region" description="Gly residues" evidence="5">
    <location>
        <begin position="179"/>
        <end position="193"/>
    </location>
</feature>
<feature type="glycosylation site" description="N-linked (GlcNAc...) asparagine" evidence="3">
    <location>
        <position position="58"/>
    </location>
</feature>
<feature type="glycosylation site" description="N-linked (GlcNAc...) asparagine" evidence="3">
    <location>
        <position position="159"/>
    </location>
</feature>
<feature type="disulfide bond" evidence="4">
    <location>
        <begin position="44"/>
        <end position="105"/>
    </location>
</feature>
<feature type="disulfide bond" evidence="4">
    <location>
        <begin position="52"/>
        <end position="98"/>
    </location>
</feature>
<feature type="disulfide bond" evidence="4">
    <location>
        <begin position="89"/>
        <end position="126"/>
    </location>
</feature>
<feature type="disulfide bond" evidence="4">
    <location>
        <begin position="115"/>
        <end position="155"/>
    </location>
</feature>
<feature type="disulfide bond" evidence="4">
    <location>
        <begin position="119"/>
        <end position="143"/>
    </location>
</feature>
<dbReference type="EMBL" id="L02530">
    <property type="protein sequence ID" value="AAA41172.1"/>
    <property type="molecule type" value="mRNA"/>
</dbReference>
<dbReference type="RefSeq" id="NP_742032.1">
    <property type="nucleotide sequence ID" value="NM_172035.1"/>
</dbReference>
<dbReference type="SMR" id="Q08464"/>
<dbReference type="BioGRID" id="249097">
    <property type="interactions" value="1"/>
</dbReference>
<dbReference type="FunCoup" id="Q08464">
    <property type="interactions" value="851"/>
</dbReference>
<dbReference type="IntAct" id="Q08464">
    <property type="interactions" value="3"/>
</dbReference>
<dbReference type="MINT" id="Q08464"/>
<dbReference type="STRING" id="10116.ENSRNOP00000036154"/>
<dbReference type="ChEMBL" id="CHEMBL4879455"/>
<dbReference type="GlyCosmos" id="Q08464">
    <property type="glycosylation" value="2 sites, No reported glycans"/>
</dbReference>
<dbReference type="GlyGen" id="Q08464">
    <property type="glycosylation" value="3 sites"/>
</dbReference>
<dbReference type="PhosphoSitePlus" id="Q08464"/>
<dbReference type="PaxDb" id="10116-ENSRNOP00000036154"/>
<dbReference type="GeneID" id="64512"/>
<dbReference type="KEGG" id="rno:64512"/>
<dbReference type="UCSC" id="RGD:71012">
    <property type="organism name" value="rat"/>
</dbReference>
<dbReference type="AGR" id="RGD:71012"/>
<dbReference type="CTD" id="2535"/>
<dbReference type="RGD" id="71012">
    <property type="gene designation" value="Fzd2"/>
</dbReference>
<dbReference type="eggNOG" id="KOG3577">
    <property type="taxonomic scope" value="Eukaryota"/>
</dbReference>
<dbReference type="InParanoid" id="Q08464"/>
<dbReference type="PhylomeDB" id="Q08464"/>
<dbReference type="Reactome" id="R-RNO-4086398">
    <property type="pathway name" value="Ca2+ pathway"/>
</dbReference>
<dbReference type="Reactome" id="R-RNO-4608870">
    <property type="pathway name" value="Asymmetric localization of PCP proteins"/>
</dbReference>
<dbReference type="Reactome" id="R-RNO-4641262">
    <property type="pathway name" value="Disassembly of the destruction complex and recruitment of AXIN to the membrane"/>
</dbReference>
<dbReference type="Reactome" id="R-RNO-5140745">
    <property type="pathway name" value="WNT5A-dependent internalization of FZD2, FZD5 and ROR2"/>
</dbReference>
<dbReference type="PRO" id="PR:Q08464"/>
<dbReference type="Proteomes" id="UP000002494">
    <property type="component" value="Unplaced"/>
</dbReference>
<dbReference type="GO" id="GO:0005737">
    <property type="term" value="C:cytoplasm"/>
    <property type="evidence" value="ECO:0000266"/>
    <property type="project" value="RGD"/>
</dbReference>
<dbReference type="GO" id="GO:0005886">
    <property type="term" value="C:plasma membrane"/>
    <property type="evidence" value="ECO:0000314"/>
    <property type="project" value="BHF-UCL"/>
</dbReference>
<dbReference type="GO" id="GO:0004930">
    <property type="term" value="F:G protein-coupled receptor activity"/>
    <property type="evidence" value="ECO:0007669"/>
    <property type="project" value="UniProtKB-KW"/>
</dbReference>
<dbReference type="GO" id="GO:0042802">
    <property type="term" value="F:identical protein binding"/>
    <property type="evidence" value="ECO:0000353"/>
    <property type="project" value="IntAct"/>
</dbReference>
<dbReference type="GO" id="GO:0030165">
    <property type="term" value="F:PDZ domain binding"/>
    <property type="evidence" value="ECO:0000266"/>
    <property type="project" value="RGD"/>
</dbReference>
<dbReference type="GO" id="GO:0046982">
    <property type="term" value="F:protein heterodimerization activity"/>
    <property type="evidence" value="ECO:0000353"/>
    <property type="project" value="BHF-UCL"/>
</dbReference>
<dbReference type="GO" id="GO:0042813">
    <property type="term" value="F:Wnt receptor activity"/>
    <property type="evidence" value="ECO:0000314"/>
    <property type="project" value="RGD"/>
</dbReference>
<dbReference type="GO" id="GO:0017147">
    <property type="term" value="F:Wnt-protein binding"/>
    <property type="evidence" value="ECO:0000318"/>
    <property type="project" value="GO_Central"/>
</dbReference>
<dbReference type="GO" id="GO:0060070">
    <property type="term" value="P:canonical Wnt signaling pathway"/>
    <property type="evidence" value="ECO:0000314"/>
    <property type="project" value="ParkinsonsUK-UCL"/>
</dbReference>
<dbReference type="GO" id="GO:0007267">
    <property type="term" value="P:cell-cell signaling"/>
    <property type="evidence" value="ECO:0000266"/>
    <property type="project" value="RGD"/>
</dbReference>
<dbReference type="GO" id="GO:0071363">
    <property type="term" value="P:cellular response to growth factor stimulus"/>
    <property type="evidence" value="ECO:0000270"/>
    <property type="project" value="RGD"/>
</dbReference>
<dbReference type="GO" id="GO:0071375">
    <property type="term" value="P:cellular response to peptide hormone stimulus"/>
    <property type="evidence" value="ECO:0000270"/>
    <property type="project" value="RGD"/>
</dbReference>
<dbReference type="GO" id="GO:0071305">
    <property type="term" value="P:cellular response to vitamin D"/>
    <property type="evidence" value="ECO:0000270"/>
    <property type="project" value="RGD"/>
</dbReference>
<dbReference type="GO" id="GO:0090103">
    <property type="term" value="P:cochlea morphogenesis"/>
    <property type="evidence" value="ECO:0000266"/>
    <property type="project" value="RGD"/>
</dbReference>
<dbReference type="GO" id="GO:0045446">
    <property type="term" value="P:endothelial cell differentiation"/>
    <property type="evidence" value="ECO:0000266"/>
    <property type="project" value="RGD"/>
</dbReference>
<dbReference type="GO" id="GO:0007199">
    <property type="term" value="P:G protein-coupled receptor signaling pathway coupled to cGMP nucleotide second messenger"/>
    <property type="evidence" value="ECO:0000314"/>
    <property type="project" value="RGD"/>
</dbReference>
<dbReference type="GO" id="GO:0060022">
    <property type="term" value="P:hard palate development"/>
    <property type="evidence" value="ECO:0000266"/>
    <property type="project" value="RGD"/>
</dbReference>
<dbReference type="GO" id="GO:0060119">
    <property type="term" value="P:inner ear receptor cell development"/>
    <property type="evidence" value="ECO:0000266"/>
    <property type="project" value="RGD"/>
</dbReference>
<dbReference type="GO" id="GO:0003149">
    <property type="term" value="P:membranous septum morphogenesis"/>
    <property type="evidence" value="ECO:0000266"/>
    <property type="project" value="RGD"/>
</dbReference>
<dbReference type="GO" id="GO:0003150">
    <property type="term" value="P:muscular septum morphogenesis"/>
    <property type="evidence" value="ECO:0000266"/>
    <property type="project" value="RGD"/>
</dbReference>
<dbReference type="GO" id="GO:0035567">
    <property type="term" value="P:non-canonical Wnt signaling pathway"/>
    <property type="evidence" value="ECO:0000318"/>
    <property type="project" value="GO_Central"/>
</dbReference>
<dbReference type="GO" id="GO:0003151">
    <property type="term" value="P:outflow tract morphogenesis"/>
    <property type="evidence" value="ECO:0000266"/>
    <property type="project" value="RGD"/>
</dbReference>
<dbReference type="GO" id="GO:0007204">
    <property type="term" value="P:positive regulation of cytosolic calcium ion concentration"/>
    <property type="evidence" value="ECO:0000314"/>
    <property type="project" value="RGD"/>
</dbReference>
<dbReference type="GO" id="GO:0045893">
    <property type="term" value="P:positive regulation of DNA-templated transcription"/>
    <property type="evidence" value="ECO:0000266"/>
    <property type="project" value="RGD"/>
</dbReference>
<dbReference type="GO" id="GO:0007608">
    <property type="term" value="P:sensory perception of smell"/>
    <property type="evidence" value="ECO:0000266"/>
    <property type="project" value="RGD"/>
</dbReference>
<dbReference type="GO" id="GO:0060412">
    <property type="term" value="P:ventricular septum morphogenesis"/>
    <property type="evidence" value="ECO:0000266"/>
    <property type="project" value="RGD"/>
</dbReference>
<dbReference type="GO" id="GO:0016055">
    <property type="term" value="P:Wnt signaling pathway"/>
    <property type="evidence" value="ECO:0000266"/>
    <property type="project" value="RGD"/>
</dbReference>
<dbReference type="GO" id="GO:0007223">
    <property type="term" value="P:Wnt signaling pathway, calcium modulating pathway"/>
    <property type="evidence" value="ECO:0000314"/>
    <property type="project" value="RGD"/>
</dbReference>
<dbReference type="CDD" id="cd07464">
    <property type="entry name" value="CRD_FZ2"/>
    <property type="match status" value="1"/>
</dbReference>
<dbReference type="FunFam" id="1.10.2000.10:FF:000003">
    <property type="entry name" value="Frizzled class receptor 2"/>
    <property type="match status" value="1"/>
</dbReference>
<dbReference type="FunFam" id="1.20.1070.10:FF:000029">
    <property type="entry name" value="Frizzled class receptor 2"/>
    <property type="match status" value="1"/>
</dbReference>
<dbReference type="Gene3D" id="1.10.2000.10">
    <property type="entry name" value="Frizzled cysteine-rich domain"/>
    <property type="match status" value="1"/>
</dbReference>
<dbReference type="Gene3D" id="1.20.1070.10">
    <property type="entry name" value="Rhodopsin 7-helix transmembrane proteins"/>
    <property type="match status" value="1"/>
</dbReference>
<dbReference type="InterPro" id="IPR015526">
    <property type="entry name" value="Frizzled/SFRP"/>
</dbReference>
<dbReference type="InterPro" id="IPR000539">
    <property type="entry name" value="Frizzled/Smoothened_7TM"/>
</dbReference>
<dbReference type="InterPro" id="IPR020067">
    <property type="entry name" value="Frizzled_dom"/>
</dbReference>
<dbReference type="InterPro" id="IPR036790">
    <property type="entry name" value="Frizzled_dom_sf"/>
</dbReference>
<dbReference type="InterPro" id="IPR041778">
    <property type="entry name" value="FZ2_CRD"/>
</dbReference>
<dbReference type="InterPro" id="IPR017981">
    <property type="entry name" value="GPCR_2-like_7TM"/>
</dbReference>
<dbReference type="PANTHER" id="PTHR11309">
    <property type="entry name" value="FRIZZLED"/>
    <property type="match status" value="1"/>
</dbReference>
<dbReference type="PANTHER" id="PTHR11309:SF34">
    <property type="entry name" value="FRIZZLED-2"/>
    <property type="match status" value="1"/>
</dbReference>
<dbReference type="Pfam" id="PF01534">
    <property type="entry name" value="Frizzled"/>
    <property type="match status" value="1"/>
</dbReference>
<dbReference type="Pfam" id="PF01392">
    <property type="entry name" value="Fz"/>
    <property type="match status" value="1"/>
</dbReference>
<dbReference type="PRINTS" id="PR00489">
    <property type="entry name" value="FRIZZLED"/>
</dbReference>
<dbReference type="SMART" id="SM00063">
    <property type="entry name" value="FRI"/>
    <property type="match status" value="1"/>
</dbReference>
<dbReference type="SMART" id="SM01330">
    <property type="entry name" value="Frizzled"/>
    <property type="match status" value="1"/>
</dbReference>
<dbReference type="SUPFAM" id="SSF63501">
    <property type="entry name" value="Frizzled cysteine-rich domain"/>
    <property type="match status" value="1"/>
</dbReference>
<dbReference type="PROSITE" id="PS50038">
    <property type="entry name" value="FZ"/>
    <property type="match status" value="1"/>
</dbReference>
<dbReference type="PROSITE" id="PS50261">
    <property type="entry name" value="G_PROTEIN_RECEP_F2_4"/>
    <property type="match status" value="1"/>
</dbReference>
<gene>
    <name type="primary">Fzd2</name>
</gene>
<keyword id="KW-1003">Cell membrane</keyword>
<keyword id="KW-0217">Developmental protein</keyword>
<keyword id="KW-1015">Disulfide bond</keyword>
<keyword id="KW-0297">G-protein coupled receptor</keyword>
<keyword id="KW-0325">Glycoprotein</keyword>
<keyword id="KW-0472">Membrane</keyword>
<keyword id="KW-0675">Receptor</keyword>
<keyword id="KW-1185">Reference proteome</keyword>
<keyword id="KW-0732">Signal</keyword>
<keyword id="KW-0807">Transducer</keyword>
<keyword id="KW-0812">Transmembrane</keyword>
<keyword id="KW-1133">Transmembrane helix</keyword>
<keyword id="KW-0832">Ubl conjugation</keyword>
<keyword id="KW-0879">Wnt signaling pathway</keyword>
<reference key="1">
    <citation type="journal article" date="1992" name="J. Biol. Chem.">
        <title>Two homologs of the Drosophila polarity gene frizzled (fz) are widely expressed in mammalian tissues.</title>
        <authorList>
            <person name="Chan S.D.H."/>
            <person name="Karpf D.B."/>
            <person name="Fowlkes M.E."/>
            <person name="Hooks M."/>
            <person name="Bradley M.S."/>
            <person name="Vuong V."/>
            <person name="Bambino T."/>
            <person name="Liu M.Y.C."/>
            <person name="Arnaud C.D."/>
            <person name="Strewler G.J."/>
            <person name="Nissenson R.A."/>
        </authorList>
    </citation>
    <scope>NUCLEOTIDE SEQUENCE [MRNA]</scope>
    <source>
        <strain>Sprague-Dawley</strain>
        <tissue>Osteosarcoma</tissue>
    </source>
</reference>
<reference key="2">
    <citation type="journal article" date="1999" name="Curr. Biol.">
        <title>Protein kinase C is differentially stimulated by Wnt and Frizzled homologs in a G-protein-dependent manner.</title>
        <authorList>
            <person name="Sheldahl L.C."/>
            <person name="Park M."/>
            <person name="Malbon C.C."/>
            <person name="Moon R.T."/>
        </authorList>
    </citation>
    <scope>WNT-MEDIATED PKC ACTIVATION</scope>
</reference>
<comment type="function">
    <text evidence="2">Receptor for Wnt proteins. Most of frizzled receptors are coupled to the beta-catenin canonical signaling pathway, which leads to the activation of disheveled proteins, inhibition of GSK-3 kinase, nuclear accumulation of beta-catenin and activation of Wnt target genes (By similarity). A second signaling pathway involving PKC and calcium fluxes has been seen for some family members, but it is not yet clear if it represents a distinct pathway or if it can be integrated in the canonical pathway, as PKC seems to be required for Wnt-mediated inactivation of GSK-3 kinase. Both pathways seem to involve interactions with G-proteins. May be involved in transduction and intercellular transmission of polarity information during tissue morphogenesis and/or in differentiated tissues. Activation by Wnt5A stimulates PKC activity via a G-protein-dependent mechanism.</text>
</comment>
<comment type="interaction">
    <interactant intactId="EBI-7402050">
        <id>Q08464</id>
    </interactant>
    <interactant intactId="EBI-8766455">
        <id>Q08463</id>
        <label>Fzd1</label>
    </interactant>
    <organismsDiffer>false</organismsDiffer>
    <experiments>6</experiments>
</comment>
<comment type="interaction">
    <interactant intactId="EBI-7402050">
        <id>Q08464</id>
    </interactant>
    <interactant intactId="EBI-7402050">
        <id>Q08464</id>
        <label>Fzd2</label>
    </interactant>
    <organismsDiffer>false</organismsDiffer>
    <experiments>3</experiments>
</comment>
<comment type="subcellular location">
    <subcellularLocation>
        <location>Membrane</location>
        <topology>Multi-pass membrane protein</topology>
    </subcellularLocation>
    <subcellularLocation>
        <location evidence="1">Cell membrane</location>
        <topology evidence="1">Multi-pass membrane protein</topology>
    </subcellularLocation>
</comment>
<comment type="tissue specificity">
    <text>Widely expressed. Most abundant in kidney, liver, uterus, ovary and heart. Lower levels seen in brain and intestine. Extremely low in calvaria, mammary glands and testis.</text>
</comment>
<comment type="developmental stage">
    <text>Expressed predominantly in neonatal tissues, at lower levels in adult.</text>
</comment>
<comment type="domain">
    <text evidence="1">Lys-Thr-X-X-X-Trp motif interacts with the PDZ domain of Dvl (Disheveled) family members and is involved in the activation of the Wnt/beta-catenin signaling pathway.</text>
</comment>
<comment type="domain">
    <text evidence="1">The FZ domain is involved in binding with Wnt ligands.</text>
</comment>
<comment type="PTM">
    <text evidence="1">Ubiquitinated by ZNRF3, leading to its degradation by the proteasome.</text>
</comment>
<comment type="similarity">
    <text evidence="6">Belongs to the G-protein coupled receptor Fz/Smo family.</text>
</comment>
<sequence>MRARSALPRSALPRLLLPLLLLPAAGPAQFHGEKGISIPDHGFCQPISIPLCTDIAYNQTIMPNLLGHTNQEDAGLEVHQFYPLVKVQCSPELRFFLCSMYAPVCTVLEQAIPPCRSICERARQGCEALMNKFGFQWPERLRCEHFPRHGAEQICVGQNHSEDGTPALLTTAPPSGLQPGAGGTPGGPGGGGAPPRYATLEHPFHCPRVLKVPSYLSYKFLGERDCAAPCEPARPDGSMFFSHHHTRFARLWILTWSVLCCASTFFTVTTSLVAMQRFRYPERPIIFLSGCYTMVSVAYIAGFVLQERVVCNERFSEDGYRTVGQGTKKEGCTILFMMLYFFSMASSIWWVILSLTWFLAAGMKWGHAAIEANSQYFHLAAWAVPAVKTITILAMGQIDGDLLSGVCFVGLNRLDPLRGFVLAPLFVYLFIGTSFLLAGFVSLFRIRTIMKHDGTKTEPLERLMVRIGVFSVLYTVPATIVIACYFYEQAFREHWERSWVSQHCKSLAIPCPAHYTPRTSPDFTVYMIKYLMTLIVGITSGFWIWSGKTLHSWRKFYTRLTNSRHGETTV</sequence>